<reference key="1">
    <citation type="journal article" date="2013" name="Nature">
        <title>The zebrafish reference genome sequence and its relationship to the human genome.</title>
        <authorList>
            <person name="Howe K."/>
            <person name="Clark M.D."/>
            <person name="Torroja C.F."/>
            <person name="Torrance J."/>
            <person name="Berthelot C."/>
            <person name="Muffato M."/>
            <person name="Collins J.E."/>
            <person name="Humphray S."/>
            <person name="McLaren K."/>
            <person name="Matthews L."/>
            <person name="McLaren S."/>
            <person name="Sealy I."/>
            <person name="Caccamo M."/>
            <person name="Churcher C."/>
            <person name="Scott C."/>
            <person name="Barrett J.C."/>
            <person name="Koch R."/>
            <person name="Rauch G.J."/>
            <person name="White S."/>
            <person name="Chow W."/>
            <person name="Kilian B."/>
            <person name="Quintais L.T."/>
            <person name="Guerra-Assuncao J.A."/>
            <person name="Zhou Y."/>
            <person name="Gu Y."/>
            <person name="Yen J."/>
            <person name="Vogel J.H."/>
            <person name="Eyre T."/>
            <person name="Redmond S."/>
            <person name="Banerjee R."/>
            <person name="Chi J."/>
            <person name="Fu B."/>
            <person name="Langley E."/>
            <person name="Maguire S.F."/>
            <person name="Laird G.K."/>
            <person name="Lloyd D."/>
            <person name="Kenyon E."/>
            <person name="Donaldson S."/>
            <person name="Sehra H."/>
            <person name="Almeida-King J."/>
            <person name="Loveland J."/>
            <person name="Trevanion S."/>
            <person name="Jones M."/>
            <person name="Quail M."/>
            <person name="Willey D."/>
            <person name="Hunt A."/>
            <person name="Burton J."/>
            <person name="Sims S."/>
            <person name="McLay K."/>
            <person name="Plumb B."/>
            <person name="Davis J."/>
            <person name="Clee C."/>
            <person name="Oliver K."/>
            <person name="Clark R."/>
            <person name="Riddle C."/>
            <person name="Elliot D."/>
            <person name="Threadgold G."/>
            <person name="Harden G."/>
            <person name="Ware D."/>
            <person name="Begum S."/>
            <person name="Mortimore B."/>
            <person name="Kerry G."/>
            <person name="Heath P."/>
            <person name="Phillimore B."/>
            <person name="Tracey A."/>
            <person name="Corby N."/>
            <person name="Dunn M."/>
            <person name="Johnson C."/>
            <person name="Wood J."/>
            <person name="Clark S."/>
            <person name="Pelan S."/>
            <person name="Griffiths G."/>
            <person name="Smith M."/>
            <person name="Glithero R."/>
            <person name="Howden P."/>
            <person name="Barker N."/>
            <person name="Lloyd C."/>
            <person name="Stevens C."/>
            <person name="Harley J."/>
            <person name="Holt K."/>
            <person name="Panagiotidis G."/>
            <person name="Lovell J."/>
            <person name="Beasley H."/>
            <person name="Henderson C."/>
            <person name="Gordon D."/>
            <person name="Auger K."/>
            <person name="Wright D."/>
            <person name="Collins J."/>
            <person name="Raisen C."/>
            <person name="Dyer L."/>
            <person name="Leung K."/>
            <person name="Robertson L."/>
            <person name="Ambridge K."/>
            <person name="Leongamornlert D."/>
            <person name="McGuire S."/>
            <person name="Gilderthorp R."/>
            <person name="Griffiths C."/>
            <person name="Manthravadi D."/>
            <person name="Nichol S."/>
            <person name="Barker G."/>
            <person name="Whitehead S."/>
            <person name="Kay M."/>
            <person name="Brown J."/>
            <person name="Murnane C."/>
            <person name="Gray E."/>
            <person name="Humphries M."/>
            <person name="Sycamore N."/>
            <person name="Barker D."/>
            <person name="Saunders D."/>
            <person name="Wallis J."/>
            <person name="Babbage A."/>
            <person name="Hammond S."/>
            <person name="Mashreghi-Mohammadi M."/>
            <person name="Barr L."/>
            <person name="Martin S."/>
            <person name="Wray P."/>
            <person name="Ellington A."/>
            <person name="Matthews N."/>
            <person name="Ellwood M."/>
            <person name="Woodmansey R."/>
            <person name="Clark G."/>
            <person name="Cooper J."/>
            <person name="Tromans A."/>
            <person name="Grafham D."/>
            <person name="Skuce C."/>
            <person name="Pandian R."/>
            <person name="Andrews R."/>
            <person name="Harrison E."/>
            <person name="Kimberley A."/>
            <person name="Garnett J."/>
            <person name="Fosker N."/>
            <person name="Hall R."/>
            <person name="Garner P."/>
            <person name="Kelly D."/>
            <person name="Bird C."/>
            <person name="Palmer S."/>
            <person name="Gehring I."/>
            <person name="Berger A."/>
            <person name="Dooley C.M."/>
            <person name="Ersan-Urun Z."/>
            <person name="Eser C."/>
            <person name="Geiger H."/>
            <person name="Geisler M."/>
            <person name="Karotki L."/>
            <person name="Kirn A."/>
            <person name="Konantz J."/>
            <person name="Konantz M."/>
            <person name="Oberlander M."/>
            <person name="Rudolph-Geiger S."/>
            <person name="Teucke M."/>
            <person name="Lanz C."/>
            <person name="Raddatz G."/>
            <person name="Osoegawa K."/>
            <person name="Zhu B."/>
            <person name="Rapp A."/>
            <person name="Widaa S."/>
            <person name="Langford C."/>
            <person name="Yang F."/>
            <person name="Schuster S.C."/>
            <person name="Carter N.P."/>
            <person name="Harrow J."/>
            <person name="Ning Z."/>
            <person name="Herrero J."/>
            <person name="Searle S.M."/>
            <person name="Enright A."/>
            <person name="Geisler R."/>
            <person name="Plasterk R.H."/>
            <person name="Lee C."/>
            <person name="Westerfield M."/>
            <person name="de Jong P.J."/>
            <person name="Zon L.I."/>
            <person name="Postlethwait J.H."/>
            <person name="Nusslein-Volhard C."/>
            <person name="Hubbard T.J."/>
            <person name="Roest Crollius H."/>
            <person name="Rogers J."/>
            <person name="Stemple D.L."/>
        </authorList>
    </citation>
    <scope>NUCLEOTIDE SEQUENCE [LARGE SCALE GENOMIC DNA]</scope>
    <source>
        <strain>Tuebingen</strain>
    </source>
</reference>
<reference key="2">
    <citation type="submission" date="2004-10" db="EMBL/GenBank/DDBJ databases">
        <authorList>
            <consortium name="NIH - Zebrafish Gene Collection (ZGC) project"/>
        </authorList>
    </citation>
    <scope>NUCLEOTIDE SEQUENCE [LARGE SCALE MRNA]</scope>
    <source>
        <strain>AB</strain>
    </source>
</reference>
<organism>
    <name type="scientific">Danio rerio</name>
    <name type="common">Zebrafish</name>
    <name type="synonym">Brachydanio rerio</name>
    <dbReference type="NCBI Taxonomy" id="7955"/>
    <lineage>
        <taxon>Eukaryota</taxon>
        <taxon>Metazoa</taxon>
        <taxon>Chordata</taxon>
        <taxon>Craniata</taxon>
        <taxon>Vertebrata</taxon>
        <taxon>Euteleostomi</taxon>
        <taxon>Actinopterygii</taxon>
        <taxon>Neopterygii</taxon>
        <taxon>Teleostei</taxon>
        <taxon>Ostariophysi</taxon>
        <taxon>Cypriniformes</taxon>
        <taxon>Danionidae</taxon>
        <taxon>Danioninae</taxon>
        <taxon>Danio</taxon>
    </lineage>
</organism>
<comment type="function">
    <text evidence="2">Hydrolyzes the galactose ester bonds of glycolipids such as galactosylceramide and galactosylsphingosine.</text>
</comment>
<comment type="catalytic activity">
    <reaction evidence="2">
        <text>a beta-D-galactosyl-(1&lt;-&gt;1')-N-acylsphing-4-enine + H2O = an N-acylsphing-4-enine + D-galactose</text>
        <dbReference type="Rhea" id="RHEA:14297"/>
        <dbReference type="ChEBI" id="CHEBI:4139"/>
        <dbReference type="ChEBI" id="CHEBI:15377"/>
        <dbReference type="ChEBI" id="CHEBI:18390"/>
        <dbReference type="ChEBI" id="CHEBI:52639"/>
        <dbReference type="EC" id="3.2.1.46"/>
    </reaction>
    <physiologicalReaction direction="left-to-right" evidence="2">
        <dbReference type="Rhea" id="RHEA:14298"/>
    </physiologicalReaction>
</comment>
<comment type="catalytic activity">
    <reaction evidence="2">
        <text>beta-D-galactosyl-(1&lt;-&gt;1)-sphing-4-enine + H2O = sphing-4-enine + D-galactose</text>
        <dbReference type="Rhea" id="RHEA:43908"/>
        <dbReference type="ChEBI" id="CHEBI:4139"/>
        <dbReference type="ChEBI" id="CHEBI:15377"/>
        <dbReference type="ChEBI" id="CHEBI:57756"/>
        <dbReference type="ChEBI" id="CHEBI:57934"/>
    </reaction>
    <physiologicalReaction direction="left-to-right" evidence="2">
        <dbReference type="Rhea" id="RHEA:43909"/>
    </physiologicalReaction>
</comment>
<comment type="catalytic activity">
    <reaction evidence="3">
        <text>a D-galactosylceramide + H2O = an N-acyl-sphingoid base + D-galactose</text>
        <dbReference type="Rhea" id="RHEA:43412"/>
        <dbReference type="ChEBI" id="CHEBI:4139"/>
        <dbReference type="ChEBI" id="CHEBI:15377"/>
        <dbReference type="ChEBI" id="CHEBI:36498"/>
        <dbReference type="ChEBI" id="CHEBI:83273"/>
    </reaction>
    <physiologicalReaction direction="left-to-right" evidence="3">
        <dbReference type="Rhea" id="RHEA:43413"/>
    </physiologicalReaction>
</comment>
<comment type="subcellular location">
    <subcellularLocation>
        <location evidence="1">Lysosome</location>
    </subcellularLocation>
</comment>
<comment type="similarity">
    <text evidence="5">Belongs to the glycosyl hydrolase 59 family.</text>
</comment>
<sequence>MQTHNFLCIISVILGCSAQFYVIDDRIGLGREFDGIGGLSGGGATSRLLVNYEEPYRSQILDYLFKPNFGASLHILKVEIGGDAQTTDGTEPSHMHSKDEGNFFRGYEWWLMKEAKKRNPNIKLIGLPWAFPGWVGYGTQWPYFFPNVTANYVITWVMGAKQHHNLDIDYIGIWNEKAFDPTYIKVLRDALDRAGFTNIGIIAADGDWSIASAMLDDPYLNDAVEVIGVHYPGTNTVKEALLTERKLWSSEDYSTYNDDIGAGCWARILNQNYVNGKMTSTISWNVIASYYENLSFGRDGLMTAEEPWSGHYIVESPIWMTAHTTQFTQPGWFYLQTVGKLNHGGSYVALTDRKGNLTIIIETMTHEHSQCIRPPLPHFDVSPQIATFELKGSFAHLADLQVWYSKLDFKSGNGTLFKQLRPIRAHNGLLSLKLDVDEVFTITTVTTAQRGFYPEPPKSCPFPKNYTDDFTIDNPPFSEAPYFADQTGVFEYFRNTTDNSSHAFTLRQVVTERPVAWAKDADQTISIIGDYSWSDVNVSCDVFIETPKTGGVFLAARVDQGGESVRQAKGVFYWIYANGTYRVTNDIGGKRVLAEGLSGTKAGVWYTLTLSVKGYFATGSLNGFPLWKNAAVLEPKSGWAALGTLSFEYAQFDNFNVIAG</sequence>
<protein>
    <recommendedName>
        <fullName evidence="2">Galactocerebrosidase</fullName>
        <shortName>GALCERase</shortName>
        <ecNumber evidence="2">3.2.1.46</ecNumber>
    </recommendedName>
    <alternativeName>
        <fullName>Galactosylceramidase</fullName>
    </alternativeName>
</protein>
<name>GALC_DANRE</name>
<accession>Q5SNX7</accession>
<accession>Q5XJ01</accession>
<keyword id="KW-1015">Disulfide bond</keyword>
<keyword id="KW-0325">Glycoprotein</keyword>
<keyword id="KW-0326">Glycosidase</keyword>
<keyword id="KW-0378">Hydrolase</keyword>
<keyword id="KW-0442">Lipid degradation</keyword>
<keyword id="KW-0443">Lipid metabolism</keyword>
<keyword id="KW-0458">Lysosome</keyword>
<keyword id="KW-1185">Reference proteome</keyword>
<keyword id="KW-0732">Signal</keyword>
<keyword id="KW-0746">Sphingolipid metabolism</keyword>
<dbReference type="EC" id="3.2.1.46" evidence="2"/>
<dbReference type="EMBL" id="AL953887">
    <property type="protein sequence ID" value="CAI11729.1"/>
    <property type="molecule type" value="Genomic_DNA"/>
</dbReference>
<dbReference type="EMBL" id="BC083517">
    <property type="protein sequence ID" value="AAH83517.1"/>
    <property type="molecule type" value="mRNA"/>
</dbReference>
<dbReference type="RefSeq" id="NP_001005921.1">
    <property type="nucleotide sequence ID" value="NM_001005921.1"/>
</dbReference>
<dbReference type="SMR" id="Q5SNX7"/>
<dbReference type="FunCoup" id="Q5SNX7">
    <property type="interactions" value="178"/>
</dbReference>
<dbReference type="STRING" id="7955.ENSDARP00000053869"/>
<dbReference type="CAZy" id="GH59">
    <property type="family name" value="Glycoside Hydrolase Family 59"/>
</dbReference>
<dbReference type="GlyCosmos" id="Q5SNX7">
    <property type="glycosylation" value="9 sites, No reported glycans"/>
</dbReference>
<dbReference type="PaxDb" id="7955-ENSDARP00000053869"/>
<dbReference type="Ensembl" id="ENSDART00000053870">
    <property type="protein sequence ID" value="ENSDARP00000053869"/>
    <property type="gene ID" value="ENSDARG00000037064"/>
</dbReference>
<dbReference type="GeneID" id="449649"/>
<dbReference type="KEGG" id="dre:449649"/>
<dbReference type="AGR" id="ZFIN:ZDB-GENE-040724-243"/>
<dbReference type="CTD" id="449649"/>
<dbReference type="ZFIN" id="ZDB-GENE-040724-243">
    <property type="gene designation" value="galca"/>
</dbReference>
<dbReference type="eggNOG" id="ENOG502QQ1Q">
    <property type="taxonomic scope" value="Eukaryota"/>
</dbReference>
<dbReference type="HOGENOM" id="CLU_015456_2_0_1"/>
<dbReference type="InParanoid" id="Q5SNX7"/>
<dbReference type="OMA" id="HEAWDEN"/>
<dbReference type="OrthoDB" id="440760at2759"/>
<dbReference type="PhylomeDB" id="Q5SNX7"/>
<dbReference type="TreeFam" id="TF312985"/>
<dbReference type="PRO" id="PR:Q5SNX7"/>
<dbReference type="Proteomes" id="UP000000437">
    <property type="component" value="Chromosome 20"/>
</dbReference>
<dbReference type="Bgee" id="ENSDARG00000037064">
    <property type="expression patterns" value="Expressed in intestine and 23 other cell types or tissues"/>
</dbReference>
<dbReference type="GO" id="GO:0005764">
    <property type="term" value="C:lysosome"/>
    <property type="evidence" value="ECO:0000314"/>
    <property type="project" value="ZFIN"/>
</dbReference>
<dbReference type="GO" id="GO:0016020">
    <property type="term" value="C:membrane"/>
    <property type="evidence" value="ECO:0007669"/>
    <property type="project" value="GOC"/>
</dbReference>
<dbReference type="GO" id="GO:0004336">
    <property type="term" value="F:galactosylceramidase activity"/>
    <property type="evidence" value="ECO:0000314"/>
    <property type="project" value="ZFIN"/>
</dbReference>
<dbReference type="GO" id="GO:0006683">
    <property type="term" value="P:galactosylceramide catabolic process"/>
    <property type="evidence" value="ECO:0000250"/>
    <property type="project" value="UniProtKB"/>
</dbReference>
<dbReference type="FunFam" id="2.60.120.560:FF:000001">
    <property type="entry name" value="galactocerebrosidase precursor"/>
    <property type="match status" value="1"/>
</dbReference>
<dbReference type="FunFam" id="3.20.20.70:FF:000091">
    <property type="entry name" value="galactocerebrosidase precursor"/>
    <property type="match status" value="1"/>
</dbReference>
<dbReference type="FunFam" id="3.20.20.80:FF:000026">
    <property type="entry name" value="galactocerebrosidase precursor"/>
    <property type="match status" value="1"/>
</dbReference>
<dbReference type="Gene3D" id="3.20.20.70">
    <property type="entry name" value="Aldolase class I"/>
    <property type="match status" value="1"/>
</dbReference>
<dbReference type="Gene3D" id="2.60.120.560">
    <property type="entry name" value="Exo-inulinase, domain 1"/>
    <property type="match status" value="1"/>
</dbReference>
<dbReference type="Gene3D" id="3.20.20.80">
    <property type="entry name" value="Glycosidases"/>
    <property type="match status" value="1"/>
</dbReference>
<dbReference type="InterPro" id="IPR013785">
    <property type="entry name" value="Aldolase_TIM"/>
</dbReference>
<dbReference type="InterPro" id="IPR049162">
    <property type="entry name" value="GH59_C"/>
</dbReference>
<dbReference type="InterPro" id="IPR049161">
    <property type="entry name" value="GH59_cat"/>
</dbReference>
<dbReference type="InterPro" id="IPR001286">
    <property type="entry name" value="Glyco_hydro_59"/>
</dbReference>
<dbReference type="InterPro" id="IPR035394">
    <property type="entry name" value="Glyco_hydro_59_dom"/>
</dbReference>
<dbReference type="InterPro" id="IPR017853">
    <property type="entry name" value="Glycoside_hydrolase_SF"/>
</dbReference>
<dbReference type="PANTHER" id="PTHR15172">
    <property type="entry name" value="GALACTOCEREBROSIDASE"/>
    <property type="match status" value="1"/>
</dbReference>
<dbReference type="PANTHER" id="PTHR15172:SF1">
    <property type="entry name" value="GALACTOCEREBROSIDASE"/>
    <property type="match status" value="1"/>
</dbReference>
<dbReference type="Pfam" id="PF02057">
    <property type="entry name" value="Glyco_hydro_59"/>
    <property type="match status" value="1"/>
</dbReference>
<dbReference type="Pfam" id="PF21708">
    <property type="entry name" value="Glyco_hydro_59_C"/>
    <property type="match status" value="1"/>
</dbReference>
<dbReference type="Pfam" id="PF17387">
    <property type="entry name" value="Glyco_hydro_59M"/>
    <property type="match status" value="1"/>
</dbReference>
<dbReference type="PRINTS" id="PR00850">
    <property type="entry name" value="GLHYDRLASE59"/>
</dbReference>
<dbReference type="SUPFAM" id="SSF51445">
    <property type="entry name" value="(Trans)glycosidases"/>
    <property type="match status" value="1"/>
</dbReference>
<gene>
    <name evidence="2" type="primary">galc</name>
    <name type="synonym">galca</name>
    <name type="ORF">si:ch211-199l3.4</name>
    <name type="ORF">zgc:92561</name>
</gene>
<feature type="signal peptide" evidence="4">
    <location>
        <begin position="1"/>
        <end position="18"/>
    </location>
</feature>
<feature type="chain" id="PRO_0000370713" description="Galactocerebrosidase">
    <location>
        <begin position="19"/>
        <end position="660"/>
    </location>
</feature>
<feature type="active site" description="Proton donor/acceptor" evidence="1">
    <location>
        <position position="176"/>
    </location>
</feature>
<feature type="active site" description="Nucleophile" evidence="1">
    <location>
        <position position="251"/>
    </location>
</feature>
<feature type="binding site" evidence="1">
    <location>
        <position position="87"/>
    </location>
    <ligand>
        <name>substrate</name>
    </ligand>
</feature>
<feature type="binding site" evidence="1">
    <location>
        <position position="129"/>
    </location>
    <ligand>
        <name>substrate</name>
    </ligand>
</feature>
<feature type="binding site" evidence="1">
    <location>
        <position position="175"/>
    </location>
    <ligand>
        <name>substrate</name>
    </ligand>
</feature>
<feature type="binding site" evidence="1">
    <location>
        <position position="373"/>
    </location>
    <ligand>
        <name>substrate</name>
    </ligand>
</feature>
<feature type="glycosylation site" description="N-linked (GlcNAc...) asparagine" evidence="4">
    <location>
        <position position="147"/>
    </location>
</feature>
<feature type="glycosylation site" description="N-linked (GlcNAc...) asparagine" evidence="4">
    <location>
        <position position="293"/>
    </location>
</feature>
<feature type="glycosylation site" description="N-linked (GlcNAc...) asparagine" evidence="4">
    <location>
        <position position="356"/>
    </location>
</feature>
<feature type="glycosylation site" description="N-linked (GlcNAc...) asparagine" evidence="4">
    <location>
        <position position="413"/>
    </location>
</feature>
<feature type="glycosylation site" description="N-linked (GlcNAc...) asparagine" evidence="4">
    <location>
        <position position="465"/>
    </location>
</feature>
<feature type="glycosylation site" description="N-linked (GlcNAc...) asparagine" evidence="4">
    <location>
        <position position="495"/>
    </location>
</feature>
<feature type="glycosylation site" description="N-linked (GlcNAc...) asparagine" evidence="4">
    <location>
        <position position="499"/>
    </location>
</feature>
<feature type="glycosylation site" description="N-linked (GlcNAc...) asparagine" evidence="4">
    <location>
        <position position="537"/>
    </location>
</feature>
<feature type="glycosylation site" description="N-linked (GlcNAc...) asparagine" evidence="4">
    <location>
        <position position="578"/>
    </location>
</feature>
<feature type="disulfide bond" evidence="1">
    <location>
        <begin position="264"/>
        <end position="371"/>
    </location>
</feature>
<feature type="sequence conflict" description="In Ref. 2; AAH83517." evidence="5" ref="2">
    <original>S</original>
    <variation>F</variation>
    <location>
        <position position="11"/>
    </location>
</feature>
<feature type="sequence conflict" description="In Ref. 2; AAH83517." evidence="5" ref="2">
    <original>A</original>
    <variation>V</variation>
    <location>
        <position position="190"/>
    </location>
</feature>
<feature type="sequence conflict" description="In Ref. 2; AAH83517." evidence="5" ref="2">
    <original>K</original>
    <variation>R</variation>
    <location>
        <position position="418"/>
    </location>
</feature>
<feature type="sequence conflict" description="In Ref. 2; AAH83517." evidence="5" ref="2">
    <original>T</original>
    <variation>I</variation>
    <location>
        <position position="511"/>
    </location>
</feature>
<feature type="sequence conflict" description="In Ref. 2; AAH83517." evidence="5" ref="2">
    <original>R</original>
    <variation>G</variation>
    <location>
        <position position="591"/>
    </location>
</feature>
<evidence type="ECO:0000250" key="1"/>
<evidence type="ECO:0000250" key="2">
    <source>
        <dbReference type="UniProtKB" id="P54803"/>
    </source>
</evidence>
<evidence type="ECO:0000250" key="3">
    <source>
        <dbReference type="UniProtKB" id="P54818"/>
    </source>
</evidence>
<evidence type="ECO:0000255" key="4"/>
<evidence type="ECO:0000305" key="5"/>
<proteinExistence type="evidence at transcript level"/>